<gene>
    <name type="primary">VMA9</name>
    <name evidence="6" type="synonym">CWH36</name>
    <name type="synonym">LDB10</name>
    <name type="ordered locus">YCL005W-A</name>
</gene>
<sequence>MSSFYTVVGVFIVVSAMSVLFWIMAPKNNQAVWRSTVILTLAMMFLMWAITFLCQLHPLVAPRRSDLRPEFAE</sequence>
<name>VA0E_YEAST</name>
<organism>
    <name type="scientific">Saccharomyces cerevisiae (strain ATCC 204508 / S288c)</name>
    <name type="common">Baker's yeast</name>
    <dbReference type="NCBI Taxonomy" id="559292"/>
    <lineage>
        <taxon>Eukaryota</taxon>
        <taxon>Fungi</taxon>
        <taxon>Dikarya</taxon>
        <taxon>Ascomycota</taxon>
        <taxon>Saccharomycotina</taxon>
        <taxon>Saccharomycetes</taxon>
        <taxon>Saccharomycetales</taxon>
        <taxon>Saccharomycetaceae</taxon>
        <taxon>Saccharomyces</taxon>
    </lineage>
</organism>
<evidence type="ECO:0000255" key="1"/>
<evidence type="ECO:0000269" key="2">
    <source>
    </source>
</evidence>
<evidence type="ECO:0000269" key="3">
    <source>
    </source>
</evidence>
<evidence type="ECO:0000269" key="4">
    <source>
    </source>
</evidence>
<evidence type="ECO:0000269" key="5">
    <source>
    </source>
</evidence>
<evidence type="ECO:0000303" key="6">
    <source>
    </source>
</evidence>
<evidence type="ECO:0000303" key="7">
    <source>
    </source>
</evidence>
<evidence type="ECO:0000305" key="8"/>
<evidence type="ECO:0007744" key="9">
    <source>
        <dbReference type="PDB" id="5TJ5"/>
    </source>
</evidence>
<evidence type="ECO:0007744" key="10">
    <source>
        <dbReference type="PDB" id="6C6L"/>
    </source>
</evidence>
<evidence type="ECO:0007829" key="11">
    <source>
        <dbReference type="PDB" id="6O7T"/>
    </source>
</evidence>
<evidence type="ECO:0007829" key="12">
    <source>
        <dbReference type="PDB" id="6PE4"/>
    </source>
</evidence>
<evidence type="ECO:0007829" key="13">
    <source>
        <dbReference type="PDB" id="8EAS"/>
    </source>
</evidence>
<evidence type="ECO:0007829" key="14">
    <source>
        <dbReference type="PDB" id="8EAU"/>
    </source>
</evidence>
<reference key="1">
    <citation type="journal article" date="1992" name="Nature">
        <title>The complete DNA sequence of yeast chromosome III.</title>
        <authorList>
            <person name="Oliver S.G."/>
            <person name="van der Aart Q.J.M."/>
            <person name="Agostoni-Carbone M.L."/>
            <person name="Aigle M."/>
            <person name="Alberghina L."/>
            <person name="Alexandraki D."/>
            <person name="Antoine G."/>
            <person name="Anwar R."/>
            <person name="Ballesta J.P.G."/>
            <person name="Benit P."/>
            <person name="Berben G."/>
            <person name="Bergantino E."/>
            <person name="Biteau N."/>
            <person name="Bolle P.-A."/>
            <person name="Bolotin-Fukuhara M."/>
            <person name="Brown A."/>
            <person name="Brown A.J.P."/>
            <person name="Buhler J.-M."/>
            <person name="Carcano C."/>
            <person name="Carignani G."/>
            <person name="Cederberg H."/>
            <person name="Chanet R."/>
            <person name="Contreras R."/>
            <person name="Crouzet M."/>
            <person name="Daignan-Fornier B."/>
            <person name="Defoor E."/>
            <person name="Delgado M.D."/>
            <person name="Demolder J."/>
            <person name="Doira C."/>
            <person name="Dubois E."/>
            <person name="Dujon B."/>
            <person name="Duesterhoeft A."/>
            <person name="Erdmann D."/>
            <person name="Esteban M."/>
            <person name="Fabre F."/>
            <person name="Fairhead C."/>
            <person name="Faye G."/>
            <person name="Feldmann H."/>
            <person name="Fiers W."/>
            <person name="Francingues-Gaillard M.-C."/>
            <person name="Franco L."/>
            <person name="Frontali L."/>
            <person name="Fukuhara H."/>
            <person name="Fuller L.J."/>
            <person name="Galland P."/>
            <person name="Gent M.E."/>
            <person name="Gigot D."/>
            <person name="Gilliquet V."/>
            <person name="Glansdorff N."/>
            <person name="Goffeau A."/>
            <person name="Grenson M."/>
            <person name="Grisanti P."/>
            <person name="Grivell L.A."/>
            <person name="de Haan M."/>
            <person name="Haasemann M."/>
            <person name="Hatat D."/>
            <person name="Hoenicka J."/>
            <person name="Hegemann J.H."/>
            <person name="Herbert C.J."/>
            <person name="Hilger F."/>
            <person name="Hohmann S."/>
            <person name="Hollenberg C.P."/>
            <person name="Huse K."/>
            <person name="Iborra F."/>
            <person name="Indge K.J."/>
            <person name="Isono K."/>
            <person name="Jacq C."/>
            <person name="Jacquet M."/>
            <person name="James C.M."/>
            <person name="Jauniaux J.-C."/>
            <person name="Jia Y."/>
            <person name="Jimenez A."/>
            <person name="Kelly A."/>
            <person name="Kleinhans U."/>
            <person name="Kreisl P."/>
            <person name="Lanfranchi G."/>
            <person name="Lewis C."/>
            <person name="van der Linden C.G."/>
            <person name="Lucchini G."/>
            <person name="Lutzenkirchen K."/>
            <person name="Maat M.J."/>
            <person name="Mallet L."/>
            <person name="Mannhaupt G."/>
            <person name="Martegani E."/>
            <person name="Mathieu A."/>
            <person name="Maurer C.T.C."/>
            <person name="McConnell D."/>
            <person name="McKee R.A."/>
            <person name="Messenguy F."/>
            <person name="Mewes H.-W."/>
            <person name="Molemans F."/>
            <person name="Montague M.A."/>
            <person name="Muzi Falconi M."/>
            <person name="Navas L."/>
            <person name="Newlon C.S."/>
            <person name="Noone D."/>
            <person name="Pallier C."/>
            <person name="Panzeri L."/>
            <person name="Pearson B.M."/>
            <person name="Perea J."/>
            <person name="Philippsen P."/>
            <person name="Pierard A."/>
            <person name="Planta R.J."/>
            <person name="Plevani P."/>
            <person name="Poetsch B."/>
            <person name="Pohl F.M."/>
            <person name="Purnelle B."/>
            <person name="Ramezani Rad M."/>
            <person name="Rasmussen S.W."/>
            <person name="Raynal A."/>
            <person name="Remacha M.A."/>
            <person name="Richterich P."/>
            <person name="Roberts A.B."/>
            <person name="Rodriguez F."/>
            <person name="Sanz E."/>
            <person name="Schaaff-Gerstenschlaeger I."/>
            <person name="Scherens B."/>
            <person name="Schweitzer B."/>
            <person name="Shu Y."/>
            <person name="Skala J."/>
            <person name="Slonimski P.P."/>
            <person name="Sor F."/>
            <person name="Soustelle C."/>
            <person name="Spiegelberg R."/>
            <person name="Stateva L.I."/>
            <person name="Steensma H.Y."/>
            <person name="Steiner S."/>
            <person name="Thierry A."/>
            <person name="Thireos G."/>
            <person name="Tzermia M."/>
            <person name="Urrestarazu L.A."/>
            <person name="Valle G."/>
            <person name="Vetter I."/>
            <person name="van Vliet-Reedijk J.C."/>
            <person name="Voet M."/>
            <person name="Volckaert G."/>
            <person name="Vreken P."/>
            <person name="Wang H."/>
            <person name="Warmington J.R."/>
            <person name="von Wettstein D."/>
            <person name="Wicksteed B.L."/>
            <person name="Wilson C."/>
            <person name="Wurst H."/>
            <person name="Xu G."/>
            <person name="Yoshikawa A."/>
            <person name="Zimmermann F.K."/>
            <person name="Sgouros J.G."/>
        </authorList>
    </citation>
    <scope>NUCLEOTIDE SEQUENCE [LARGE SCALE GENOMIC DNA]</scope>
    <source>
        <strain>ATCC 204508 / S288c</strain>
    </source>
</reference>
<reference key="2">
    <citation type="journal article" date="2014" name="G3 (Bethesda)">
        <title>The reference genome sequence of Saccharomyces cerevisiae: Then and now.</title>
        <authorList>
            <person name="Engel S.R."/>
            <person name="Dietrich F.S."/>
            <person name="Fisk D.G."/>
            <person name="Binkley G."/>
            <person name="Balakrishnan R."/>
            <person name="Costanzo M.C."/>
            <person name="Dwight S.S."/>
            <person name="Hitz B.C."/>
            <person name="Karra K."/>
            <person name="Nash R.S."/>
            <person name="Weng S."/>
            <person name="Wong E.D."/>
            <person name="Lloyd P."/>
            <person name="Skrzypek M.S."/>
            <person name="Miyasato S.R."/>
            <person name="Simison M."/>
            <person name="Cherry J.M."/>
        </authorList>
    </citation>
    <scope>GENOME REANNOTATION</scope>
    <source>
        <strain>ATCC 204508 / S288c</strain>
    </source>
</reference>
<reference key="3">
    <citation type="journal article" date="2003" name="Genome Biol.">
        <title>Reinvestigation of the Saccharomyces cerevisiae genome annotation by comparison to the genome of a related fungus: Ashbya gossypii.</title>
        <authorList>
            <person name="Brachat S."/>
            <person name="Dietrich F.S."/>
            <person name="Voegeli S."/>
            <person name="Zhang Z."/>
            <person name="Stuart L."/>
            <person name="Lerch A."/>
            <person name="Gates K."/>
            <person name="Gaffney T.D."/>
            <person name="Philippsen P."/>
        </authorList>
    </citation>
    <scope>GENOME REANNOTATION</scope>
    <source>
        <strain>ATCC 204511 / S288c / AB972</strain>
    </source>
</reference>
<reference key="4">
    <citation type="journal article" date="2003" name="Nature">
        <title>Sequencing and comparison of yeast species to identify genes and regulatory elements.</title>
        <authorList>
            <person name="Kellis M."/>
            <person name="Patterson N."/>
            <person name="Endrizzi M."/>
            <person name="Birren B.W."/>
            <person name="Lander E.S."/>
        </authorList>
    </citation>
    <scope>GENOME REANNOTATION</scope>
</reference>
<reference key="5">
    <citation type="journal article" date="2004" name="J. Biol. Chem.">
        <title>Genome-wide analysis of iron-dependent growth reveals a novel yeast gene required for vacuolar acidification.</title>
        <authorList>
            <person name="Davis-Kaplan S.R."/>
            <person name="McVey Ward D."/>
            <person name="Shiflett S.L."/>
            <person name="Kaplan J."/>
        </authorList>
    </citation>
    <scope>FUNCTION</scope>
</reference>
<reference key="6">
    <citation type="journal article" date="2004" name="J. Biol. Chem.">
        <title>The yeast vacuolar proton-translocating ATPase contains a subunit homologous to the Manduca sexta and bovine e subunits that is essential for function.</title>
        <authorList>
            <person name="Sambade M."/>
            <person name="Kane P.M."/>
        </authorList>
    </citation>
    <scope>SUBUNIT</scope>
    <scope>SUBCELLULAR LOCATION</scope>
</reference>
<reference evidence="9" key="7">
    <citation type="journal article" date="2016" name="Nature">
        <title>Atomic model for the membrane-embedded VO motor of a eukaryotic V-ATPase.</title>
        <authorList>
            <person name="Mazhab-Jafari M.T."/>
            <person name="Rohou A."/>
            <person name="Schmidt C."/>
            <person name="Bueler S.A."/>
            <person name="Benlekbir S."/>
            <person name="Robinson C.V."/>
            <person name="Rubinstein J.L."/>
        </authorList>
    </citation>
    <scope>STRUCTURE BY ELECTRON MICROSCOPY (3.90 ANGSTROMS) OF 5-61</scope>
    <scope>IDENTIFICATION IN THE V-ATPASE COMPLEX</scope>
</reference>
<reference evidence="10" key="8">
    <citation type="journal article" date="2018" name="Mol. Cell">
        <title>The 3.5-A cryoEM structure of nanodisc-reconstituted yeast vacuolar ATPase V0 proton channel.</title>
        <authorList>
            <person name="Roh S.H."/>
            <person name="Stam N.J."/>
            <person name="Hryc C.F."/>
            <person name="Couoh-Cardel S."/>
            <person name="Pintilie G."/>
            <person name="Chiu W."/>
            <person name="Wilkens S."/>
        </authorList>
    </citation>
    <scope>STRUCTURE BY ELECTRON MICROSCOPY (3.50 ANGSTROMS)</scope>
    <scope>IDENTIFICATION IN THE V-ATPASE COMPLEX</scope>
</reference>
<feature type="chain" id="PRO_0000071737" description="V-type proton ATPase subunit e">
    <location>
        <begin position="1"/>
        <end position="73"/>
    </location>
</feature>
<feature type="topological domain" description="Lumenal" evidence="8">
    <location>
        <begin position="1"/>
        <end position="3"/>
    </location>
</feature>
<feature type="transmembrane region" description="Helical" evidence="1">
    <location>
        <begin position="4"/>
        <end position="24"/>
    </location>
</feature>
<feature type="topological domain" description="Cytoplasmic" evidence="8">
    <location>
        <begin position="25"/>
        <end position="35"/>
    </location>
</feature>
<feature type="transmembrane region" description="Helical" evidence="1">
    <location>
        <begin position="36"/>
        <end position="56"/>
    </location>
</feature>
<feature type="topological domain" description="Lumenal" evidence="8">
    <location>
        <begin position="57"/>
        <end position="73"/>
    </location>
</feature>
<feature type="helix" evidence="13">
    <location>
        <begin position="4"/>
        <end position="24"/>
    </location>
</feature>
<feature type="strand" evidence="11">
    <location>
        <begin position="27"/>
        <end position="29"/>
    </location>
</feature>
<feature type="helix" evidence="13">
    <location>
        <begin position="30"/>
        <end position="54"/>
    </location>
</feature>
<feature type="strand" evidence="12">
    <location>
        <begin position="55"/>
        <end position="57"/>
    </location>
</feature>
<feature type="strand" evidence="13">
    <location>
        <begin position="63"/>
        <end position="65"/>
    </location>
</feature>
<feature type="helix" evidence="14">
    <location>
        <begin position="69"/>
        <end position="71"/>
    </location>
</feature>
<keyword id="KW-0002">3D-structure</keyword>
<keyword id="KW-0375">Hydrogen ion transport</keyword>
<keyword id="KW-0406">Ion transport</keyword>
<keyword id="KW-0472">Membrane</keyword>
<keyword id="KW-1185">Reference proteome</keyword>
<keyword id="KW-0812">Transmembrane</keyword>
<keyword id="KW-1133">Transmembrane helix</keyword>
<keyword id="KW-0813">Transport</keyword>
<keyword id="KW-0926">Vacuole</keyword>
<dbReference type="EMBL" id="X59720">
    <property type="status" value="NOT_ANNOTATED_CDS"/>
    <property type="molecule type" value="Genomic_DNA"/>
</dbReference>
<dbReference type="EMBL" id="BK006937">
    <property type="protein sequence ID" value="DAA07474.1"/>
    <property type="molecule type" value="Genomic_DNA"/>
</dbReference>
<dbReference type="RefSeq" id="NP_958835.1">
    <property type="nucleotide sequence ID" value="NM_001184518.1"/>
</dbReference>
<dbReference type="PDB" id="5TJ5">
    <property type="method" value="EM"/>
    <property type="resolution" value="3.90 A"/>
    <property type="chains" value="L=5-61"/>
</dbReference>
<dbReference type="PDB" id="5VOX">
    <property type="method" value="EM"/>
    <property type="resolution" value="6.80 A"/>
    <property type="chains" value="c=1-73"/>
</dbReference>
<dbReference type="PDB" id="5VOY">
    <property type="method" value="EM"/>
    <property type="resolution" value="7.90 A"/>
    <property type="chains" value="c=1-73"/>
</dbReference>
<dbReference type="PDB" id="5VOZ">
    <property type="method" value="EM"/>
    <property type="resolution" value="7.60 A"/>
    <property type="chains" value="c=1-73"/>
</dbReference>
<dbReference type="PDB" id="6C6L">
    <property type="method" value="EM"/>
    <property type="resolution" value="3.50 A"/>
    <property type="chains" value="M=1-73"/>
</dbReference>
<dbReference type="PDB" id="6M0R">
    <property type="method" value="EM"/>
    <property type="resolution" value="2.70 A"/>
    <property type="chains" value="M=1-71"/>
</dbReference>
<dbReference type="PDB" id="6M0S">
    <property type="method" value="EM"/>
    <property type="resolution" value="3.60 A"/>
    <property type="chains" value="M=1-71"/>
</dbReference>
<dbReference type="PDB" id="6O7T">
    <property type="method" value="EM"/>
    <property type="resolution" value="3.20 A"/>
    <property type="chains" value="e=1-73"/>
</dbReference>
<dbReference type="PDB" id="6O7U">
    <property type="method" value="EM"/>
    <property type="resolution" value="3.10 A"/>
    <property type="chains" value="e=1-73"/>
</dbReference>
<dbReference type="PDB" id="6O7V">
    <property type="method" value="EM"/>
    <property type="resolution" value="6.60 A"/>
    <property type="chains" value="e=1-73"/>
</dbReference>
<dbReference type="PDB" id="6O7W">
    <property type="method" value="EM"/>
    <property type="resolution" value="7.00 A"/>
    <property type="chains" value="e=1-73"/>
</dbReference>
<dbReference type="PDB" id="6O7X">
    <property type="method" value="EM"/>
    <property type="resolution" value="8.70 A"/>
    <property type="chains" value="e=1-73"/>
</dbReference>
<dbReference type="PDB" id="6PE4">
    <property type="method" value="EM"/>
    <property type="resolution" value="3.10 A"/>
    <property type="chains" value="E=1-73"/>
</dbReference>
<dbReference type="PDB" id="6PE5">
    <property type="method" value="EM"/>
    <property type="resolution" value="3.20 A"/>
    <property type="chains" value="E=1-73"/>
</dbReference>
<dbReference type="PDB" id="7FDA">
    <property type="method" value="EM"/>
    <property type="resolution" value="4.20 A"/>
    <property type="chains" value="d=1-73"/>
</dbReference>
<dbReference type="PDB" id="7FDB">
    <property type="method" value="EM"/>
    <property type="resolution" value="4.80 A"/>
    <property type="chains" value="d=1-73"/>
</dbReference>
<dbReference type="PDB" id="7FDC">
    <property type="method" value="EM"/>
    <property type="resolution" value="6.60 A"/>
    <property type="chains" value="d=1-73"/>
</dbReference>
<dbReference type="PDB" id="7TAO">
    <property type="method" value="EM"/>
    <property type="resolution" value="3.20 A"/>
    <property type="chains" value="M=1-73"/>
</dbReference>
<dbReference type="PDB" id="7TAP">
    <property type="method" value="EM"/>
    <property type="resolution" value="2.80 A"/>
    <property type="chains" value="M=1-73"/>
</dbReference>
<dbReference type="PDB" id="7TMR">
    <property type="method" value="EM"/>
    <property type="resolution" value="3.50 A"/>
    <property type="chains" value="e=1-73"/>
</dbReference>
<dbReference type="PDB" id="7TMS">
    <property type="method" value="EM"/>
    <property type="resolution" value="3.80 A"/>
    <property type="chains" value="e=1-73"/>
</dbReference>
<dbReference type="PDB" id="7TMT">
    <property type="method" value="EM"/>
    <property type="resolution" value="3.80 A"/>
    <property type="chains" value="e=1-73"/>
</dbReference>
<dbReference type="PDB" id="8EAS">
    <property type="method" value="EM"/>
    <property type="resolution" value="2.60 A"/>
    <property type="chains" value="e=1-73"/>
</dbReference>
<dbReference type="PDB" id="8EAU">
    <property type="method" value="EM"/>
    <property type="resolution" value="3.10 A"/>
    <property type="chains" value="e=1-73"/>
</dbReference>
<dbReference type="PDB" id="9E76">
    <property type="method" value="EM"/>
    <property type="resolution" value="3.40 A"/>
    <property type="chains" value="M=1-73"/>
</dbReference>
<dbReference type="PDB" id="9E7L">
    <property type="method" value="EM"/>
    <property type="resolution" value="3.33 A"/>
    <property type="chains" value="M=1-73"/>
</dbReference>
<dbReference type="PDB" id="9MJ4">
    <property type="method" value="EM"/>
    <property type="resolution" value="3.70 A"/>
    <property type="chains" value="M=1-73"/>
</dbReference>
<dbReference type="PDBsum" id="5TJ5"/>
<dbReference type="PDBsum" id="5VOX"/>
<dbReference type="PDBsum" id="5VOY"/>
<dbReference type="PDBsum" id="5VOZ"/>
<dbReference type="PDBsum" id="6C6L"/>
<dbReference type="PDBsum" id="6M0R"/>
<dbReference type="PDBsum" id="6M0S"/>
<dbReference type="PDBsum" id="6O7T"/>
<dbReference type="PDBsum" id="6O7U"/>
<dbReference type="PDBsum" id="6O7V"/>
<dbReference type="PDBsum" id="6O7W"/>
<dbReference type="PDBsum" id="6O7X"/>
<dbReference type="PDBsum" id="6PE4"/>
<dbReference type="PDBsum" id="6PE5"/>
<dbReference type="PDBsum" id="7FDA"/>
<dbReference type="PDBsum" id="7FDB"/>
<dbReference type="PDBsum" id="7FDC"/>
<dbReference type="PDBsum" id="7TAO"/>
<dbReference type="PDBsum" id="7TAP"/>
<dbReference type="PDBsum" id="7TMR"/>
<dbReference type="PDBsum" id="7TMS"/>
<dbReference type="PDBsum" id="7TMT"/>
<dbReference type="PDBsum" id="8EAS"/>
<dbReference type="PDBsum" id="8EAU"/>
<dbReference type="PDBsum" id="9E76"/>
<dbReference type="PDBsum" id="9E7L"/>
<dbReference type="PDBsum" id="9MJ4"/>
<dbReference type="EMDB" id="EMD-0644"/>
<dbReference type="EMDB" id="EMD-0645"/>
<dbReference type="EMDB" id="EMD-0646"/>
<dbReference type="EMDB" id="EMD-0647"/>
<dbReference type="EMDB" id="EMD-0648"/>
<dbReference type="EMDB" id="EMD-20322"/>
<dbReference type="EMDB" id="EMD-20323"/>
<dbReference type="EMDB" id="EMD-25779"/>
<dbReference type="EMDB" id="EMD-25780"/>
<dbReference type="EMDB" id="EMD-26000"/>
<dbReference type="EMDB" id="EMD-26001"/>
<dbReference type="EMDB" id="EMD-26002"/>
<dbReference type="EMDB" id="EMD-27984"/>
<dbReference type="EMDB" id="EMD-27986"/>
<dbReference type="EMDB" id="EMD-30034"/>
<dbReference type="EMDB" id="EMD-30035"/>
<dbReference type="EMDB" id="EMD-31538"/>
<dbReference type="EMDB" id="EMD-31539"/>
<dbReference type="EMDB" id="EMD-31540"/>
<dbReference type="EMDB" id="EMD-47659"/>
<dbReference type="EMDB" id="EMD-47679"/>
<dbReference type="EMDB" id="EMD-48311"/>
<dbReference type="EMDB" id="EMD-7348"/>
<dbReference type="EMDB" id="EMD-8409"/>
<dbReference type="EMDB" id="EMD-8724"/>
<dbReference type="EMDB" id="EMD-8725"/>
<dbReference type="EMDB" id="EMD-8726"/>
<dbReference type="SMR" id="Q3E7B6"/>
<dbReference type="BioGRID" id="37085">
    <property type="interactions" value="458"/>
</dbReference>
<dbReference type="ComplexPortal" id="CPX-1192">
    <property type="entry name" value="Vacuolar proton translocating ATPase complex, Golgi variant"/>
</dbReference>
<dbReference type="ComplexPortal" id="CPX-1193">
    <property type="entry name" value="Vacuolar proton translocating ATPase complex, vacuole variant"/>
</dbReference>
<dbReference type="FunCoup" id="Q3E7B6">
    <property type="interactions" value="137"/>
</dbReference>
<dbReference type="STRING" id="4932.YCL005W-A"/>
<dbReference type="TCDB" id="3.A.2.2.3">
    <property type="family name" value="the h+- or na+-translocating f-type, v-type and a-type atpase (f-atpase) superfamily"/>
</dbReference>
<dbReference type="iPTMnet" id="Q3E7B6"/>
<dbReference type="PaxDb" id="4932-YCL005W-A"/>
<dbReference type="PeptideAtlas" id="Q3E7B6"/>
<dbReference type="TopDownProteomics" id="Q3E7B6"/>
<dbReference type="EnsemblFungi" id="YCL005W-A_mRNA">
    <property type="protein sequence ID" value="YCL005W-A"/>
    <property type="gene ID" value="YCL005W-A"/>
</dbReference>
<dbReference type="GeneID" id="2732686"/>
<dbReference type="KEGG" id="sce:YCL005W-A"/>
<dbReference type="AGR" id="SGD:S000028508"/>
<dbReference type="SGD" id="S000028508">
    <property type="gene designation" value="VMA9"/>
</dbReference>
<dbReference type="VEuPathDB" id="FungiDB:YCL005W-A"/>
<dbReference type="eggNOG" id="ENOG502S76V">
    <property type="taxonomic scope" value="Eukaryota"/>
</dbReference>
<dbReference type="HOGENOM" id="CLU_170555_1_0_1"/>
<dbReference type="InParanoid" id="Q3E7B6"/>
<dbReference type="OMA" id="WAITYLC"/>
<dbReference type="OrthoDB" id="1508846at2759"/>
<dbReference type="BioCyc" id="YEAST:G3O-29423-MONOMER"/>
<dbReference type="Reactome" id="R-SCE-1222556">
    <property type="pathway name" value="ROS and RNS production in phagocytes"/>
</dbReference>
<dbReference type="Reactome" id="R-SCE-77387">
    <property type="pathway name" value="Insulin receptor recycling"/>
</dbReference>
<dbReference type="Reactome" id="R-SCE-917977">
    <property type="pathway name" value="Transferrin endocytosis and recycling"/>
</dbReference>
<dbReference type="Reactome" id="R-SCE-9639288">
    <property type="pathway name" value="Amino acids regulate mTORC1"/>
</dbReference>
<dbReference type="BioGRID-ORCS" id="2732686">
    <property type="hits" value="4 hits in 10 CRISPR screens"/>
</dbReference>
<dbReference type="PRO" id="PR:Q3E7B6"/>
<dbReference type="Proteomes" id="UP000002311">
    <property type="component" value="Chromosome III"/>
</dbReference>
<dbReference type="RNAct" id="Q3E7B6">
    <property type="molecule type" value="protein"/>
</dbReference>
<dbReference type="GO" id="GO:0000329">
    <property type="term" value="C:fungal-type vacuole membrane"/>
    <property type="evidence" value="ECO:0000315"/>
    <property type="project" value="SGD"/>
</dbReference>
<dbReference type="GO" id="GO:0000139">
    <property type="term" value="C:Golgi membrane"/>
    <property type="evidence" value="ECO:0000303"/>
    <property type="project" value="ComplexPortal"/>
</dbReference>
<dbReference type="GO" id="GO:0033176">
    <property type="term" value="C:proton-transporting V-type ATPase complex"/>
    <property type="evidence" value="ECO:0000353"/>
    <property type="project" value="ComplexPortal"/>
</dbReference>
<dbReference type="GO" id="GO:0016471">
    <property type="term" value="C:vacuolar proton-transporting V-type ATPase complex"/>
    <property type="evidence" value="ECO:0000353"/>
    <property type="project" value="ComplexPortal"/>
</dbReference>
<dbReference type="GO" id="GO:0000220">
    <property type="term" value="C:vacuolar proton-transporting V-type ATPase, V0 domain"/>
    <property type="evidence" value="ECO:0000314"/>
    <property type="project" value="UniProtKB"/>
</dbReference>
<dbReference type="GO" id="GO:0042625">
    <property type="term" value="F:ATPase-coupled ion transmembrane transporter activity"/>
    <property type="evidence" value="ECO:0000315"/>
    <property type="project" value="SGD"/>
</dbReference>
<dbReference type="GO" id="GO:0046961">
    <property type="term" value="F:proton-transporting ATPase activity, rotational mechanism"/>
    <property type="evidence" value="ECO:0000316"/>
    <property type="project" value="UniProtKB"/>
</dbReference>
<dbReference type="GO" id="GO:0000032">
    <property type="term" value="P:cell wall mannoprotein biosynthetic process"/>
    <property type="evidence" value="ECO:0000315"/>
    <property type="project" value="SGD"/>
</dbReference>
<dbReference type="GO" id="GO:0048388">
    <property type="term" value="P:endosomal lumen acidification"/>
    <property type="evidence" value="ECO:0000303"/>
    <property type="project" value="ComplexPortal"/>
</dbReference>
<dbReference type="GO" id="GO:0061795">
    <property type="term" value="P:Golgi lumen acidification"/>
    <property type="evidence" value="ECO:0000303"/>
    <property type="project" value="ComplexPortal"/>
</dbReference>
<dbReference type="GO" id="GO:0065003">
    <property type="term" value="P:protein-containing complex assembly"/>
    <property type="evidence" value="ECO:0000315"/>
    <property type="project" value="SGD"/>
</dbReference>
<dbReference type="GO" id="GO:1902600">
    <property type="term" value="P:proton transmembrane transport"/>
    <property type="evidence" value="ECO:0000314"/>
    <property type="project" value="ComplexPortal"/>
</dbReference>
<dbReference type="GO" id="GO:0055085">
    <property type="term" value="P:transmembrane transport"/>
    <property type="evidence" value="ECO:0000315"/>
    <property type="project" value="SGD"/>
</dbReference>
<dbReference type="GO" id="GO:0007035">
    <property type="term" value="P:vacuolar acidification"/>
    <property type="evidence" value="ECO:0000315"/>
    <property type="project" value="SGD"/>
</dbReference>
<dbReference type="InterPro" id="IPR008389">
    <property type="entry name" value="ATPase_V0-cplx_e1/e2_su"/>
</dbReference>
<dbReference type="PANTHER" id="PTHR12263:SF0">
    <property type="entry name" value="V-TYPE PROTON ATPASE SUBUNIT"/>
    <property type="match status" value="1"/>
</dbReference>
<dbReference type="PANTHER" id="PTHR12263">
    <property type="entry name" value="VACUOLAR ATP SYNTHASE SUBUNIT H"/>
    <property type="match status" value="1"/>
</dbReference>
<dbReference type="Pfam" id="PF05493">
    <property type="entry name" value="ATP_synt_H"/>
    <property type="match status" value="1"/>
</dbReference>
<comment type="function">
    <text evidence="2">Subunit of the V0 complex of vacuolar(H+)-ATPase (V-ATPase), a multisubunit enzyme composed of a peripheral complex (V1) that hydrolyzes ATP and a membrane integral complex (V0) that translocates protons (PubMed:14594803). V-ATPase is responsible for acidifying and maintaining the pH of intracellular compartments (PubMed:14594803).</text>
</comment>
<comment type="subunit">
    <text evidence="3 4 5">V-ATPase is a heteromultimeric enzyme composed of a peripheral catalytic V1 complex (components A to H) attached to an integral membrane V0 proton pore complex (components: a, c, c', c'', d, e, f and VOA1).</text>
</comment>
<comment type="subcellular location">
    <subcellularLocation>
        <location evidence="3">Vacuole membrane</location>
        <topology evidence="3">Multi-pass membrane protein</topology>
    </subcellularLocation>
</comment>
<comment type="similarity">
    <text evidence="8">Belongs to the V-ATPase e1/e2 subunit family.</text>
</comment>
<accession>Q3E7B6</accession>
<accession>D6VR05</accession>
<proteinExistence type="evidence at protein level"/>
<protein>
    <recommendedName>
        <fullName evidence="7">V-type proton ATPase subunit e</fullName>
        <shortName>V-ATPase subunit e</shortName>
    </recommendedName>
    <alternativeName>
        <fullName>Low dye-binding protein 10</fullName>
    </alternativeName>
    <alternativeName>
        <fullName>Vacuolar proton pump subunit e</fullName>
    </alternativeName>
</protein>